<reference key="1">
    <citation type="journal article" date="2004" name="Nucleic Acids Res.">
        <title>Unique features revealed by the genome sequence of Acinetobacter sp. ADP1, a versatile and naturally transformation competent bacterium.</title>
        <authorList>
            <person name="Barbe V."/>
            <person name="Vallenet D."/>
            <person name="Fonknechten N."/>
            <person name="Kreimeyer A."/>
            <person name="Oztas S."/>
            <person name="Labarre L."/>
            <person name="Cruveiller S."/>
            <person name="Robert C."/>
            <person name="Duprat S."/>
            <person name="Wincker P."/>
            <person name="Ornston L.N."/>
            <person name="Weissenbach J."/>
            <person name="Marliere P."/>
            <person name="Cohen G.N."/>
            <person name="Medigue C."/>
        </authorList>
    </citation>
    <scope>NUCLEOTIDE SEQUENCE [LARGE SCALE GENOMIC DNA]</scope>
    <source>
        <strain>ATCC 33305 / BD413 / ADP1</strain>
    </source>
</reference>
<protein>
    <recommendedName>
        <fullName evidence="1">Chaperone protein HscA homolog</fullName>
    </recommendedName>
</protein>
<sequence length="620" mass="68321">MALLQIAEPGQSSAPHEHRIAIGIDLGTTHSLVATVLSGQSKVLQDEKGRVLFPSIVHYAEQSIEYGDDAKPFITTDPKNSIISVKRFMGRSKADIKFQHPYVLVGNDNEMPAFETAQGRKTPVEISAAILNQLKIRAEESLKNPINGAVITVPAYFDEAQRQATRDAAQLAGLNVLRLLNEPTAAAIAYGLDQENQLSSDRNYVIYDLGGGTFDVSILRFSQGVFEVLATGGHTALGGDDLDRLIVKWAKKQLHIESLDDHEYAAFLVAARTAKEQLSEQQSVYFKALDHKLELNRDTFESIIQIALDKTISVCKRVLRDAKLSLDEIEKVVLVGGSTRSYAVQNVVRQVFNQEPLCTINPDEVVAIGASITANQLIGNSQDGSLLLDVTPLSLGLETMGGLVERLISRNTAIPVARRQEFTTYQDGQSAMLIHVVQGERDLVEHCRSLGRFVLHGIPPMTAGQARIEVTFQVDADGLLTVSAQETTSGVKAQIDIKPSYGLSATDTERLLLEGFQHAEEDKNLRHLQETKVEAQRELEALEQALKNDAGLLDIQQLQALHTAKDQLQQQLQSNDIDQIERAVAQLKIHSDEFAALRMNQHIDHALKGTKLEDWSDSQK</sequence>
<comment type="function">
    <text evidence="1">Chaperone involved in the maturation of iron-sulfur cluster-containing proteins. Has a low intrinsic ATPase activity which is markedly stimulated by HscB.</text>
</comment>
<comment type="similarity">
    <text evidence="1">Belongs to the heat shock protein 70 family.</text>
</comment>
<proteinExistence type="inferred from homology"/>
<gene>
    <name evidence="1" type="primary">hscA</name>
    <name type="ordered locus">ACIAD1399</name>
</gene>
<organism>
    <name type="scientific">Acinetobacter baylyi (strain ATCC 33305 / BD413 / ADP1)</name>
    <dbReference type="NCBI Taxonomy" id="62977"/>
    <lineage>
        <taxon>Bacteria</taxon>
        <taxon>Pseudomonadati</taxon>
        <taxon>Pseudomonadota</taxon>
        <taxon>Gammaproteobacteria</taxon>
        <taxon>Moraxellales</taxon>
        <taxon>Moraxellaceae</taxon>
        <taxon>Acinetobacter</taxon>
    </lineage>
</organism>
<evidence type="ECO:0000255" key="1">
    <source>
        <dbReference type="HAMAP-Rule" id="MF_00679"/>
    </source>
</evidence>
<feature type="chain" id="PRO_0000078613" description="Chaperone protein HscA homolog">
    <location>
        <begin position="1"/>
        <end position="620"/>
    </location>
</feature>
<keyword id="KW-0067">ATP-binding</keyword>
<keyword id="KW-0143">Chaperone</keyword>
<keyword id="KW-0547">Nucleotide-binding</keyword>
<accession>Q6FCE6</accession>
<dbReference type="EMBL" id="CR543861">
    <property type="protein sequence ID" value="CAG68265.1"/>
    <property type="molecule type" value="Genomic_DNA"/>
</dbReference>
<dbReference type="RefSeq" id="WP_004925600.1">
    <property type="nucleotide sequence ID" value="NC_005966.1"/>
</dbReference>
<dbReference type="SMR" id="Q6FCE6"/>
<dbReference type="STRING" id="202950.GCA_001485005_01156"/>
<dbReference type="GeneID" id="45233814"/>
<dbReference type="KEGG" id="aci:ACIAD1399"/>
<dbReference type="eggNOG" id="COG0443">
    <property type="taxonomic scope" value="Bacteria"/>
</dbReference>
<dbReference type="HOGENOM" id="CLU_005965_2_3_6"/>
<dbReference type="OrthoDB" id="9766019at2"/>
<dbReference type="BioCyc" id="ASP62977:ACIAD_RS06460-MONOMER"/>
<dbReference type="Proteomes" id="UP000000430">
    <property type="component" value="Chromosome"/>
</dbReference>
<dbReference type="GO" id="GO:0005524">
    <property type="term" value="F:ATP binding"/>
    <property type="evidence" value="ECO:0007669"/>
    <property type="project" value="UniProtKB-KW"/>
</dbReference>
<dbReference type="GO" id="GO:0016887">
    <property type="term" value="F:ATP hydrolysis activity"/>
    <property type="evidence" value="ECO:0007669"/>
    <property type="project" value="UniProtKB-UniRule"/>
</dbReference>
<dbReference type="GO" id="GO:0140662">
    <property type="term" value="F:ATP-dependent protein folding chaperone"/>
    <property type="evidence" value="ECO:0007669"/>
    <property type="project" value="InterPro"/>
</dbReference>
<dbReference type="GO" id="GO:0051082">
    <property type="term" value="F:unfolded protein binding"/>
    <property type="evidence" value="ECO:0007669"/>
    <property type="project" value="InterPro"/>
</dbReference>
<dbReference type="GO" id="GO:0016226">
    <property type="term" value="P:iron-sulfur cluster assembly"/>
    <property type="evidence" value="ECO:0007669"/>
    <property type="project" value="InterPro"/>
</dbReference>
<dbReference type="CDD" id="cd10236">
    <property type="entry name" value="ASKHA_NBD_HSP70_HscA"/>
    <property type="match status" value="1"/>
</dbReference>
<dbReference type="FunFam" id="3.30.420.40:FF:000046">
    <property type="entry name" value="Chaperone protein HscA"/>
    <property type="match status" value="1"/>
</dbReference>
<dbReference type="Gene3D" id="1.20.1270.10">
    <property type="match status" value="1"/>
</dbReference>
<dbReference type="Gene3D" id="3.30.420.40">
    <property type="match status" value="2"/>
</dbReference>
<dbReference type="Gene3D" id="3.90.640.10">
    <property type="entry name" value="Actin, Chain A, domain 4"/>
    <property type="match status" value="1"/>
</dbReference>
<dbReference type="Gene3D" id="2.60.34.10">
    <property type="entry name" value="Substrate Binding Domain Of DNAk, Chain A, domain 1"/>
    <property type="match status" value="1"/>
</dbReference>
<dbReference type="HAMAP" id="MF_00679">
    <property type="entry name" value="HscA"/>
    <property type="match status" value="1"/>
</dbReference>
<dbReference type="InterPro" id="IPR043129">
    <property type="entry name" value="ATPase_NBD"/>
</dbReference>
<dbReference type="InterPro" id="IPR018181">
    <property type="entry name" value="Heat_shock_70_CS"/>
</dbReference>
<dbReference type="InterPro" id="IPR042039">
    <property type="entry name" value="HscA_NBD"/>
</dbReference>
<dbReference type="InterPro" id="IPR029048">
    <property type="entry name" value="HSP70_C_sf"/>
</dbReference>
<dbReference type="InterPro" id="IPR029047">
    <property type="entry name" value="HSP70_peptide-bd_sf"/>
</dbReference>
<dbReference type="InterPro" id="IPR013126">
    <property type="entry name" value="Hsp_70_fam"/>
</dbReference>
<dbReference type="InterPro" id="IPR010236">
    <property type="entry name" value="ISC_FeS_clus_asmbl_HscA"/>
</dbReference>
<dbReference type="NCBIfam" id="TIGR01991">
    <property type="entry name" value="HscA"/>
    <property type="match status" value="1"/>
</dbReference>
<dbReference type="NCBIfam" id="NF003520">
    <property type="entry name" value="PRK05183.1"/>
    <property type="match status" value="1"/>
</dbReference>
<dbReference type="PANTHER" id="PTHR19375">
    <property type="entry name" value="HEAT SHOCK PROTEIN 70KDA"/>
    <property type="match status" value="1"/>
</dbReference>
<dbReference type="Pfam" id="PF00012">
    <property type="entry name" value="HSP70"/>
    <property type="match status" value="1"/>
</dbReference>
<dbReference type="PRINTS" id="PR00301">
    <property type="entry name" value="HEATSHOCK70"/>
</dbReference>
<dbReference type="SUPFAM" id="SSF53067">
    <property type="entry name" value="Actin-like ATPase domain"/>
    <property type="match status" value="2"/>
</dbReference>
<dbReference type="SUPFAM" id="SSF100934">
    <property type="entry name" value="Heat shock protein 70kD (HSP70), C-terminal subdomain"/>
    <property type="match status" value="1"/>
</dbReference>
<dbReference type="SUPFAM" id="SSF100920">
    <property type="entry name" value="Heat shock protein 70kD (HSP70), peptide-binding domain"/>
    <property type="match status" value="1"/>
</dbReference>
<dbReference type="PROSITE" id="PS00297">
    <property type="entry name" value="HSP70_1"/>
    <property type="match status" value="1"/>
</dbReference>
<dbReference type="PROSITE" id="PS00329">
    <property type="entry name" value="HSP70_2"/>
    <property type="match status" value="1"/>
</dbReference>
<name>HSCA_ACIAD</name>